<protein>
    <recommendedName>
        <fullName>Tic20 family protein</fullName>
    </recommendedName>
</protein>
<dbReference type="EMBL" id="BA000022">
    <property type="protein sequence ID" value="BAA17427.1"/>
    <property type="molecule type" value="Genomic_DNA"/>
</dbReference>
<dbReference type="PIR" id="S77324">
    <property type="entry name" value="S77324"/>
</dbReference>
<dbReference type="SMR" id="P73387"/>
<dbReference type="IntAct" id="P73387">
    <property type="interactions" value="7"/>
</dbReference>
<dbReference type="STRING" id="1148.gene:10498291"/>
<dbReference type="PaxDb" id="1148-1652506"/>
<dbReference type="EnsemblBacteria" id="BAA17427">
    <property type="protein sequence ID" value="BAA17427"/>
    <property type="gene ID" value="BAA17427"/>
</dbReference>
<dbReference type="KEGG" id="syn:sll1737"/>
<dbReference type="eggNOG" id="ENOG502ZXE8">
    <property type="taxonomic scope" value="Bacteria"/>
</dbReference>
<dbReference type="InParanoid" id="P73387"/>
<dbReference type="PhylomeDB" id="P73387"/>
<dbReference type="Proteomes" id="UP000001425">
    <property type="component" value="Chromosome"/>
</dbReference>
<dbReference type="GO" id="GO:0005886">
    <property type="term" value="C:plasma membrane"/>
    <property type="evidence" value="ECO:0007669"/>
    <property type="project" value="UniProtKB-SubCell"/>
</dbReference>
<dbReference type="InterPro" id="IPR005691">
    <property type="entry name" value="Tic20"/>
</dbReference>
<dbReference type="PANTHER" id="PTHR33510">
    <property type="entry name" value="PROTEIN TIC 20-II, CHLOROPLASTIC"/>
    <property type="match status" value="1"/>
</dbReference>
<dbReference type="PANTHER" id="PTHR33510:SF5">
    <property type="entry name" value="PROTEIN TIC 20-II, CHLOROPLASTIC"/>
    <property type="match status" value="1"/>
</dbReference>
<dbReference type="Pfam" id="PF16166">
    <property type="entry name" value="TIC20"/>
    <property type="match status" value="1"/>
</dbReference>
<feature type="chain" id="PRO_0000277375" description="Tic20 family protein">
    <location>
        <begin position="1"/>
        <end position="160"/>
    </location>
</feature>
<feature type="transmembrane region" description="Helical" evidence="1">
    <location>
        <begin position="13"/>
        <end position="33"/>
    </location>
</feature>
<feature type="transmembrane region" description="Helical" evidence="1">
    <location>
        <begin position="53"/>
        <end position="73"/>
    </location>
</feature>
<feature type="transmembrane region" description="Helical" evidence="1">
    <location>
        <begin position="87"/>
        <end position="107"/>
    </location>
</feature>
<feature type="transmembrane region" description="Helical" evidence="1">
    <location>
        <begin position="122"/>
        <end position="142"/>
    </location>
</feature>
<gene>
    <name type="ordered locus">sll1737</name>
</gene>
<sequence length="160" mass="17955">MASNSTADGKDRFFSALIYVIPLIDAFMFGGFLLQQFPVLQIIYLPIMPLLQFYYQFPFASFIIFIVLFMAVVRNNNISHFIRFNAMQAILIGILLSLFGLIVAYVIQPVFGQGLVTETLYNFAFLGALACGFFGIVQSVLGRYAEIPTISDAAYSQVRF</sequence>
<organism>
    <name type="scientific">Synechocystis sp. (strain ATCC 27184 / PCC 6803 / Kazusa)</name>
    <dbReference type="NCBI Taxonomy" id="1111708"/>
    <lineage>
        <taxon>Bacteria</taxon>
        <taxon>Bacillati</taxon>
        <taxon>Cyanobacteriota</taxon>
        <taxon>Cyanophyceae</taxon>
        <taxon>Synechococcales</taxon>
        <taxon>Merismopediaceae</taxon>
        <taxon>Synechocystis</taxon>
    </lineage>
</organism>
<evidence type="ECO:0000255" key="1"/>
<evidence type="ECO:0000305" key="2"/>
<reference key="1">
    <citation type="journal article" date="1996" name="DNA Res.">
        <title>Sequence analysis of the genome of the unicellular cyanobacterium Synechocystis sp. strain PCC6803. II. Sequence determination of the entire genome and assignment of potential protein-coding regions.</title>
        <authorList>
            <person name="Kaneko T."/>
            <person name="Sato S."/>
            <person name="Kotani H."/>
            <person name="Tanaka A."/>
            <person name="Asamizu E."/>
            <person name="Nakamura Y."/>
            <person name="Miyajima N."/>
            <person name="Hirosawa M."/>
            <person name="Sugiura M."/>
            <person name="Sasamoto S."/>
            <person name="Kimura T."/>
            <person name="Hosouchi T."/>
            <person name="Matsuno A."/>
            <person name="Muraki A."/>
            <person name="Nakazaki N."/>
            <person name="Naruo K."/>
            <person name="Okumura S."/>
            <person name="Shimpo S."/>
            <person name="Takeuchi C."/>
            <person name="Wada T."/>
            <person name="Watanabe A."/>
            <person name="Yamada M."/>
            <person name="Yasuda M."/>
            <person name="Tabata S."/>
        </authorList>
    </citation>
    <scope>NUCLEOTIDE SEQUENCE [LARGE SCALE GENOMIC DNA]</scope>
    <source>
        <strain>ATCC 27184 / PCC 6803 / Kazusa</strain>
    </source>
</reference>
<proteinExistence type="inferred from homology"/>
<accession>P73387</accession>
<keyword id="KW-1003">Cell membrane</keyword>
<keyword id="KW-0472">Membrane</keyword>
<keyword id="KW-1185">Reference proteome</keyword>
<keyword id="KW-0812">Transmembrane</keyword>
<keyword id="KW-1133">Transmembrane helix</keyword>
<comment type="subcellular location">
    <subcellularLocation>
        <location evidence="2">Cell membrane</location>
        <topology evidence="2">Multi-pass membrane protein</topology>
    </subcellularLocation>
</comment>
<comment type="similarity">
    <text evidence="2">Belongs to the Tic20 family.</text>
</comment>
<name>YC60L_SYNY3</name>